<proteinExistence type="inferred from homology"/>
<dbReference type="EC" id="2.1.1.-" evidence="6"/>
<dbReference type="EMBL" id="CM001879">
    <property type="protein sequence ID" value="EOX91020.1"/>
    <property type="molecule type" value="Genomic_DNA"/>
</dbReference>
<dbReference type="SMR" id="A0A061DFM8"/>
<dbReference type="EnsemblPlants" id="EOX91020">
    <property type="protein sequence ID" value="EOX91020"/>
    <property type="gene ID" value="TCM_000331"/>
</dbReference>
<dbReference type="Gramene" id="EOX91020">
    <property type="protein sequence ID" value="EOX91020"/>
    <property type="gene ID" value="TCM_000331"/>
</dbReference>
<dbReference type="eggNOG" id="ENOG502QQVK">
    <property type="taxonomic scope" value="Eukaryota"/>
</dbReference>
<dbReference type="HOGENOM" id="CLU_019628_2_0_1"/>
<dbReference type="InParanoid" id="A0A061DFM8"/>
<dbReference type="OMA" id="QHASCIN"/>
<dbReference type="Proteomes" id="UP000026915">
    <property type="component" value="Chromosome 1"/>
</dbReference>
<dbReference type="Proteomes" id="UP000694886">
    <property type="component" value="Unplaced"/>
</dbReference>
<dbReference type="GO" id="GO:0046872">
    <property type="term" value="F:metal ion binding"/>
    <property type="evidence" value="ECO:0007669"/>
    <property type="project" value="UniProtKB-KW"/>
</dbReference>
<dbReference type="GO" id="GO:0008757">
    <property type="term" value="F:S-adenosylmethionine-dependent methyltransferase activity"/>
    <property type="evidence" value="ECO:0000318"/>
    <property type="project" value="GO_Central"/>
</dbReference>
<dbReference type="GO" id="GO:0032259">
    <property type="term" value="P:methylation"/>
    <property type="evidence" value="ECO:0000318"/>
    <property type="project" value="GO_Central"/>
</dbReference>
<dbReference type="Gene3D" id="1.10.1200.270">
    <property type="entry name" value="Methyltransferase, alpha-helical capping domain"/>
    <property type="match status" value="1"/>
</dbReference>
<dbReference type="Gene3D" id="3.40.50.150">
    <property type="entry name" value="Vaccinia Virus protein VP39"/>
    <property type="match status" value="1"/>
</dbReference>
<dbReference type="InterPro" id="IPR005299">
    <property type="entry name" value="MeTrfase_7"/>
</dbReference>
<dbReference type="InterPro" id="IPR042086">
    <property type="entry name" value="MeTrfase_capping"/>
</dbReference>
<dbReference type="InterPro" id="IPR029063">
    <property type="entry name" value="SAM-dependent_MTases_sf"/>
</dbReference>
<dbReference type="PANTHER" id="PTHR31009">
    <property type="entry name" value="S-ADENOSYL-L-METHIONINE:CARBOXYL METHYLTRANSFERASE FAMILY PROTEIN"/>
    <property type="match status" value="1"/>
</dbReference>
<dbReference type="Pfam" id="PF03492">
    <property type="entry name" value="Methyltransf_7"/>
    <property type="match status" value="1"/>
</dbReference>
<dbReference type="SUPFAM" id="SSF53335">
    <property type="entry name" value="S-adenosyl-L-methionine-dependent methyltransferases"/>
    <property type="match status" value="1"/>
</dbReference>
<keyword id="KW-0460">Magnesium</keyword>
<keyword id="KW-0479">Metal-binding</keyword>
<keyword id="KW-0489">Methyltransferase</keyword>
<keyword id="KW-1185">Reference proteome</keyword>
<keyword id="KW-0808">Transferase</keyword>
<reference key="1">
    <citation type="journal article" date="2013" name="Genome Biol.">
        <title>The genome sequence of the most widely cultivated cacao type and its use to identify candidate genes regulating pod color.</title>
        <authorList>
            <person name="Motamayor J.C."/>
            <person name="Mockaitis K."/>
            <person name="Schmutz J."/>
            <person name="Haiminen N."/>
            <person name="Livingstone D. III"/>
            <person name="Cornejo O."/>
            <person name="Findley S.D."/>
            <person name="Zheng P."/>
            <person name="Utro F."/>
            <person name="Royaert S."/>
            <person name="Saski C."/>
            <person name="Jenkins J."/>
            <person name="Podicheti R."/>
            <person name="Zhao M."/>
            <person name="Scheffler B.E."/>
            <person name="Stack J.C."/>
            <person name="Feltus F.A."/>
            <person name="Mustiga G.M."/>
            <person name="Amores F."/>
            <person name="Phillips W."/>
            <person name="Marelli J.P."/>
            <person name="May G.D."/>
            <person name="Shapiro H."/>
            <person name="Ma J."/>
            <person name="Bustamante C.D."/>
            <person name="Schnell R.J."/>
            <person name="Main D."/>
            <person name="Gilbert D."/>
            <person name="Parida L."/>
            <person name="Kuhn D.N."/>
        </authorList>
    </citation>
    <scope>NUCLEOTIDE SEQUENCE [LARGE SCALE GENOMIC DNA]</scope>
    <source>
        <strain>cv. Matina 1-6</strain>
    </source>
</reference>
<feature type="chain" id="PRO_0000451804" description="Probable methyltransferase TCM_000331">
    <location>
        <begin position="1"/>
        <end position="369"/>
    </location>
</feature>
<feature type="binding site" evidence="2">
    <location>
        <position position="18"/>
    </location>
    <ligand>
        <name>S-adenosyl-L-homocysteine</name>
        <dbReference type="ChEBI" id="CHEBI:57856"/>
    </ligand>
</feature>
<feature type="binding site" evidence="2">
    <location>
        <position position="60"/>
    </location>
    <ligand>
        <name>S-adenosyl-L-homocysteine</name>
        <dbReference type="ChEBI" id="CHEBI:57856"/>
    </ligand>
</feature>
<feature type="binding site" evidence="2">
    <location>
        <position position="65"/>
    </location>
    <ligand>
        <name>S-adenosyl-L-homocysteine</name>
        <dbReference type="ChEBI" id="CHEBI:57856"/>
    </ligand>
</feature>
<feature type="binding site" evidence="2">
    <location>
        <position position="98"/>
    </location>
    <ligand>
        <name>S-adenosyl-L-homocysteine</name>
        <dbReference type="ChEBI" id="CHEBI:57856"/>
    </ligand>
</feature>
<feature type="binding site" evidence="1">
    <location>
        <position position="99"/>
    </location>
    <ligand>
        <name>S-adenosyl-L-homocysteine</name>
        <dbReference type="ChEBI" id="CHEBI:57856"/>
    </ligand>
</feature>
<feature type="binding site" evidence="2">
    <location>
        <position position="137"/>
    </location>
    <ligand>
        <name>S-adenosyl-L-homocysteine</name>
        <dbReference type="ChEBI" id="CHEBI:57856"/>
    </ligand>
</feature>
<feature type="binding site" evidence="2">
    <location>
        <position position="138"/>
    </location>
    <ligand>
        <name>S-adenosyl-L-homocysteine</name>
        <dbReference type="ChEBI" id="CHEBI:57856"/>
    </ligand>
</feature>
<feature type="binding site" evidence="4">
    <location>
        <position position="176"/>
    </location>
    <ligand>
        <name>Mg(2+)</name>
        <dbReference type="ChEBI" id="CHEBI:18420"/>
    </ligand>
</feature>
<feature type="binding site" evidence="4">
    <location>
        <position position="261"/>
    </location>
    <ligand>
        <name>Mg(2+)</name>
        <dbReference type="ChEBI" id="CHEBI:18420"/>
    </ligand>
</feature>
<feature type="binding site" evidence="4">
    <location>
        <position position="263"/>
    </location>
    <ligand>
        <name>Mg(2+)</name>
        <dbReference type="ChEBI" id="CHEBI:18420"/>
    </ligand>
</feature>
<feature type="binding site" evidence="4">
    <location>
        <position position="264"/>
    </location>
    <ligand>
        <name>Mg(2+)</name>
        <dbReference type="ChEBI" id="CHEBI:18420"/>
    </ligand>
</feature>
<feature type="site" description="Involved in substrate discrimination" evidence="5">
    <location>
        <position position="152"/>
    </location>
</feature>
<feature type="site" description="Involved in substrate discrimination" evidence="3">
    <location>
        <position position="224"/>
    </location>
</feature>
<feature type="site" description="Involved in substrate discrimination" evidence="5">
    <location>
        <position position="337"/>
    </location>
</feature>
<evidence type="ECO:0000250" key="1">
    <source>
        <dbReference type="UniProtKB" id="A0A6C0WW36"/>
    </source>
</evidence>
<evidence type="ECO:0000250" key="2">
    <source>
        <dbReference type="UniProtKB" id="B2KPR3"/>
    </source>
</evidence>
<evidence type="ECO:0000250" key="3">
    <source>
        <dbReference type="UniProtKB" id="Q2HXI6"/>
    </source>
</evidence>
<evidence type="ECO:0000250" key="4">
    <source>
        <dbReference type="UniProtKB" id="Q9FLN8"/>
    </source>
</evidence>
<evidence type="ECO:0000250" key="5">
    <source>
        <dbReference type="UniProtKB" id="Q9FZN8"/>
    </source>
</evidence>
<evidence type="ECO:0000305" key="6"/>
<evidence type="ECO:0000312" key="7">
    <source>
        <dbReference type="EMBL" id="EOX91020.1"/>
    </source>
</evidence>
<sequence>MVKASVPCMNSGDKETSYGTCSLPQEIVLPKARPILEDTIKDMFSNVSSTDCIKVADLGCSSGPNTFMAISIVVDTFHEMCQQAQLKTSPEFQVFLNDLPENDFNNIFRSVASFTDRIKKGKGDKFGLCFVTGVPGSFYGRLFPNRSLHLVHSSYSVNWLSKACISFHVPDGIGNNKGSVYMAESSPPNVFKAHSRQFKEDFSTFLKLRSQEMIPGGRMVLTFNGRSNLYPSKQDDDWKLQLAKSLYDLVVEGIVKEADADSFNIPMYAPYKGELCEIIQKEDSFDLDKLEVVQINWGPRDVLTNEDFEFDKYQRGQKTANSVRAITEPMLASHFGEDILDKLFTGLAKYEAERLGYKLTSIVVSMKKK</sequence>
<organism>
    <name type="scientific">Theobroma cacao</name>
    <name type="common">Cacao</name>
    <name type="synonym">Cocoa</name>
    <dbReference type="NCBI Taxonomy" id="3641"/>
    <lineage>
        <taxon>Eukaryota</taxon>
        <taxon>Viridiplantae</taxon>
        <taxon>Streptophyta</taxon>
        <taxon>Embryophyta</taxon>
        <taxon>Tracheophyta</taxon>
        <taxon>Spermatophyta</taxon>
        <taxon>Magnoliopsida</taxon>
        <taxon>eudicotyledons</taxon>
        <taxon>Gunneridae</taxon>
        <taxon>Pentapetalae</taxon>
        <taxon>rosids</taxon>
        <taxon>malvids</taxon>
        <taxon>Malvales</taxon>
        <taxon>Malvaceae</taxon>
        <taxon>Byttnerioideae</taxon>
        <taxon>Theobroma</taxon>
    </lineage>
</organism>
<accession>A0A061DFM8</accession>
<gene>
    <name evidence="7" type="ORF">TCM_000331</name>
</gene>
<comment type="cofactor">
    <cofactor evidence="4">
        <name>Mg(2+)</name>
        <dbReference type="ChEBI" id="CHEBI:18420"/>
    </cofactor>
    <text evidence="4">Binds 1 Mg(2+) ion per subunit.</text>
</comment>
<comment type="similarity">
    <text evidence="6">Belongs to the methyltransferase superfamily. Type-7 methyltransferase family.</text>
</comment>
<name>MTR2_THECC</name>
<protein>
    <recommendedName>
        <fullName evidence="6">Probable methyltransferase TCM_000331</fullName>
        <ecNumber evidence="6">2.1.1.-</ecNumber>
    </recommendedName>
</protein>